<evidence type="ECO:0000255" key="1">
    <source>
        <dbReference type="HAMAP-Rule" id="MF_01080"/>
    </source>
</evidence>
<reference key="1">
    <citation type="journal article" date="2008" name="Proc. Natl. Acad. Sci. U.S.A.">
        <title>The genome of Clostridium kluyveri, a strict anaerobe with unique metabolic features.</title>
        <authorList>
            <person name="Seedorf H."/>
            <person name="Fricke W.F."/>
            <person name="Veith B."/>
            <person name="Brueggemann H."/>
            <person name="Liesegang H."/>
            <person name="Strittmatter A."/>
            <person name="Miethke M."/>
            <person name="Buckel W."/>
            <person name="Hinderberger J."/>
            <person name="Li F."/>
            <person name="Hagemeier C."/>
            <person name="Thauer R.K."/>
            <person name="Gottschalk G."/>
        </authorList>
    </citation>
    <scope>NUCLEOTIDE SEQUENCE [LARGE SCALE GENOMIC DNA]</scope>
    <source>
        <strain>ATCC 8527 / DSM 555 / NBRC 12016 / NCIMB 10680 / K1</strain>
    </source>
</reference>
<proteinExistence type="inferred from homology"/>
<dbReference type="EC" id="5.4.99.25" evidence="1"/>
<dbReference type="EMBL" id="CP000673">
    <property type="protein sequence ID" value="EDK33476.1"/>
    <property type="molecule type" value="Genomic_DNA"/>
</dbReference>
<dbReference type="RefSeq" id="WP_012101823.1">
    <property type="nucleotide sequence ID" value="NC_009706.1"/>
</dbReference>
<dbReference type="SMR" id="A5N845"/>
<dbReference type="STRING" id="431943.CKL_1434"/>
<dbReference type="KEGG" id="ckl:CKL_1434"/>
<dbReference type="eggNOG" id="COG0130">
    <property type="taxonomic scope" value="Bacteria"/>
</dbReference>
<dbReference type="HOGENOM" id="CLU_032087_0_1_9"/>
<dbReference type="Proteomes" id="UP000002411">
    <property type="component" value="Chromosome"/>
</dbReference>
<dbReference type="GO" id="GO:0003723">
    <property type="term" value="F:RNA binding"/>
    <property type="evidence" value="ECO:0007669"/>
    <property type="project" value="InterPro"/>
</dbReference>
<dbReference type="GO" id="GO:0160148">
    <property type="term" value="F:tRNA pseudouridine(55) synthase activity"/>
    <property type="evidence" value="ECO:0007669"/>
    <property type="project" value="UniProtKB-EC"/>
</dbReference>
<dbReference type="GO" id="GO:1990481">
    <property type="term" value="P:mRNA pseudouridine synthesis"/>
    <property type="evidence" value="ECO:0007669"/>
    <property type="project" value="TreeGrafter"/>
</dbReference>
<dbReference type="GO" id="GO:0031119">
    <property type="term" value="P:tRNA pseudouridine synthesis"/>
    <property type="evidence" value="ECO:0007669"/>
    <property type="project" value="UniProtKB-UniRule"/>
</dbReference>
<dbReference type="CDD" id="cd02573">
    <property type="entry name" value="PseudoU_synth_EcTruB"/>
    <property type="match status" value="1"/>
</dbReference>
<dbReference type="FunFam" id="3.30.2350.10:FF:000011">
    <property type="entry name" value="tRNA pseudouridine synthase B"/>
    <property type="match status" value="1"/>
</dbReference>
<dbReference type="Gene3D" id="3.30.2350.10">
    <property type="entry name" value="Pseudouridine synthase"/>
    <property type="match status" value="1"/>
</dbReference>
<dbReference type="HAMAP" id="MF_01080">
    <property type="entry name" value="TruB_bact"/>
    <property type="match status" value="1"/>
</dbReference>
<dbReference type="InterPro" id="IPR020103">
    <property type="entry name" value="PsdUridine_synth_cat_dom_sf"/>
</dbReference>
<dbReference type="InterPro" id="IPR002501">
    <property type="entry name" value="PsdUridine_synth_N"/>
</dbReference>
<dbReference type="InterPro" id="IPR014780">
    <property type="entry name" value="tRNA_psdUridine_synth_TruB"/>
</dbReference>
<dbReference type="InterPro" id="IPR032819">
    <property type="entry name" value="TruB_C"/>
</dbReference>
<dbReference type="NCBIfam" id="TIGR00431">
    <property type="entry name" value="TruB"/>
    <property type="match status" value="1"/>
</dbReference>
<dbReference type="PANTHER" id="PTHR13767:SF2">
    <property type="entry name" value="PSEUDOURIDYLATE SYNTHASE TRUB1"/>
    <property type="match status" value="1"/>
</dbReference>
<dbReference type="PANTHER" id="PTHR13767">
    <property type="entry name" value="TRNA-PSEUDOURIDINE SYNTHASE"/>
    <property type="match status" value="1"/>
</dbReference>
<dbReference type="Pfam" id="PF16198">
    <property type="entry name" value="TruB_C_2"/>
    <property type="match status" value="1"/>
</dbReference>
<dbReference type="Pfam" id="PF01509">
    <property type="entry name" value="TruB_N"/>
    <property type="match status" value="1"/>
</dbReference>
<dbReference type="SUPFAM" id="SSF55120">
    <property type="entry name" value="Pseudouridine synthase"/>
    <property type="match status" value="1"/>
</dbReference>
<comment type="function">
    <text evidence="1">Responsible for synthesis of pseudouridine from uracil-55 in the psi GC loop of transfer RNAs.</text>
</comment>
<comment type="catalytic activity">
    <reaction evidence="1">
        <text>uridine(55) in tRNA = pseudouridine(55) in tRNA</text>
        <dbReference type="Rhea" id="RHEA:42532"/>
        <dbReference type="Rhea" id="RHEA-COMP:10101"/>
        <dbReference type="Rhea" id="RHEA-COMP:10102"/>
        <dbReference type="ChEBI" id="CHEBI:65314"/>
        <dbReference type="ChEBI" id="CHEBI:65315"/>
        <dbReference type="EC" id="5.4.99.25"/>
    </reaction>
</comment>
<comment type="similarity">
    <text evidence="1">Belongs to the pseudouridine synthase TruB family. Type 1 subfamily.</text>
</comment>
<keyword id="KW-0413">Isomerase</keyword>
<keyword id="KW-1185">Reference proteome</keyword>
<keyword id="KW-0819">tRNA processing</keyword>
<gene>
    <name evidence="1" type="primary">truB</name>
    <name type="ordered locus">CKL_1434</name>
</gene>
<protein>
    <recommendedName>
        <fullName evidence="1">tRNA pseudouridine synthase B</fullName>
        <ecNumber evidence="1">5.4.99.25</ecNumber>
    </recommendedName>
    <alternativeName>
        <fullName evidence="1">tRNA pseudouridine(55) synthase</fullName>
        <shortName evidence="1">Psi55 synthase</shortName>
    </alternativeName>
    <alternativeName>
        <fullName evidence="1">tRNA pseudouridylate synthase</fullName>
    </alternativeName>
    <alternativeName>
        <fullName evidence="1">tRNA-uridine isomerase</fullName>
    </alternativeName>
</protein>
<organism>
    <name type="scientific">Clostridium kluyveri (strain ATCC 8527 / DSM 555 / NBRC 12016 / NCIMB 10680 / K1)</name>
    <dbReference type="NCBI Taxonomy" id="431943"/>
    <lineage>
        <taxon>Bacteria</taxon>
        <taxon>Bacillati</taxon>
        <taxon>Bacillota</taxon>
        <taxon>Clostridia</taxon>
        <taxon>Eubacteriales</taxon>
        <taxon>Clostridiaceae</taxon>
        <taxon>Clostridium</taxon>
    </lineage>
</organism>
<sequence length="289" mass="32971">MDGILNINKPEGMTSFDVVRKVRFMLKNEKVGHTGTLDPMASGVLPICVGRATKFADYMVESKKIYLAELRLGITTETYDREGSVVNTRGVYLKKKDIIEEILSFQGEIEQVPPMYSALKVNGRRLYELARKGIEIERKKRKITIYSIDIVNIELPYVSFKVTCSKGTYIRSLCNDIGNNLNCGGTMWNLKRLSTGNFNIADSIALEYLDSENILKYIIPIDKALYGYPEVLVEDEYVKKILNGISIKDESFLSKTIKDKLYRVYIEGNKFIGIGMNKDFQFKMVKLFV</sequence>
<feature type="chain" id="PRO_1000084572" description="tRNA pseudouridine synthase B">
    <location>
        <begin position="1"/>
        <end position="289"/>
    </location>
</feature>
<feature type="active site" description="Nucleophile" evidence="1">
    <location>
        <position position="38"/>
    </location>
</feature>
<name>TRUB_CLOK5</name>
<accession>A5N845</accession>